<keyword id="KW-0963">Cytoplasm</keyword>
<keyword id="KW-0206">Cytoskeleton</keyword>
<keyword id="KW-0342">GTP-binding</keyword>
<keyword id="KW-0460">Magnesium</keyword>
<keyword id="KW-0479">Metal-binding</keyword>
<keyword id="KW-0493">Microtubule</keyword>
<keyword id="KW-0547">Nucleotide-binding</keyword>
<keyword id="KW-1185">Reference proteome</keyword>
<proteinExistence type="evidence at transcript level"/>
<protein>
    <recommendedName>
        <fullName>Tubulin beta-6 chain</fullName>
    </recommendedName>
    <alternativeName>
        <fullName>Beta-6-tubulin</fullName>
    </alternativeName>
</protein>
<comment type="function">
    <text evidence="1">Tubulin is the major constituent of microtubules, a cylinder consisting of laterally associated linear protofilaments composed of alpha- and beta-tubulin heterodimers. Microtubules grow by the addition of GTP-tubulin dimers to the microtubule end, where a stabilizing cap forms. Below the cap, tubulin dimers are in GDP-bound state, owing to GTPase activity of alpha-tubulin.</text>
</comment>
<comment type="cofactor">
    <cofactor evidence="2">
        <name>Mg(2+)</name>
        <dbReference type="ChEBI" id="CHEBI:18420"/>
    </cofactor>
</comment>
<comment type="subunit">
    <text>Dimer of alpha and beta chains. A typical microtubule is a hollow water-filled tube with an outer diameter of 25 nm and an inner diameter of 15 nM. Alpha-beta heterodimers associate head-to-tail to form protofilaments running lengthwise along the microtubule wall with the beta-tubulin subunit facing the microtubule plus end conferring a structural polarity. Microtubules usually have 13 protofilaments but different protofilament numbers can be found in some organisms and specialized cells.</text>
</comment>
<comment type="subcellular location">
    <subcellularLocation>
        <location>Cytoplasm</location>
        <location>Cytoskeleton</location>
    </subcellularLocation>
</comment>
<comment type="miscellaneous">
    <text>There are nine genes coding for beta-tubulin.</text>
</comment>
<comment type="similarity">
    <text evidence="5">Belongs to the tubulin family.</text>
</comment>
<evidence type="ECO:0000250" key="1">
    <source>
        <dbReference type="UniProtKB" id="P02557"/>
    </source>
</evidence>
<evidence type="ECO:0000250" key="2">
    <source>
        <dbReference type="UniProtKB" id="P68363"/>
    </source>
</evidence>
<evidence type="ECO:0000250" key="3">
    <source>
        <dbReference type="UniProtKB" id="Q13509"/>
    </source>
</evidence>
<evidence type="ECO:0000256" key="4">
    <source>
        <dbReference type="SAM" id="MobiDB-lite"/>
    </source>
</evidence>
<evidence type="ECO:0000305" key="5"/>
<dbReference type="EMBL" id="M84703">
    <property type="protein sequence ID" value="AAA32884.1"/>
    <property type="molecule type" value="Genomic_DNA"/>
</dbReference>
<dbReference type="EMBL" id="AB007727">
    <property type="protein sequence ID" value="BAB10043.1"/>
    <property type="molecule type" value="Genomic_DNA"/>
</dbReference>
<dbReference type="EMBL" id="CP002688">
    <property type="protein sequence ID" value="AED91783.1"/>
    <property type="molecule type" value="Genomic_DNA"/>
</dbReference>
<dbReference type="EMBL" id="AF360260">
    <property type="protein sequence ID" value="AAK25970.1"/>
    <property type="molecule type" value="mRNA"/>
</dbReference>
<dbReference type="EMBL" id="AY040074">
    <property type="protein sequence ID" value="AAK64132.1"/>
    <property type="molecule type" value="mRNA"/>
</dbReference>
<dbReference type="PIR" id="JQ1590">
    <property type="entry name" value="JQ1590"/>
</dbReference>
<dbReference type="RefSeq" id="NP_196786.1">
    <property type="nucleotide sequence ID" value="NM_121263.4"/>
</dbReference>
<dbReference type="SMR" id="P29514"/>
<dbReference type="BioGRID" id="16378">
    <property type="interactions" value="5"/>
</dbReference>
<dbReference type="FunCoup" id="P29514">
    <property type="interactions" value="2139"/>
</dbReference>
<dbReference type="STRING" id="3702.P29514"/>
<dbReference type="ChEMBL" id="CHEMBL2424501"/>
<dbReference type="iPTMnet" id="P29514"/>
<dbReference type="MetOSite" id="P29514"/>
<dbReference type="PaxDb" id="3702-AT5G12250.1"/>
<dbReference type="ProteomicsDB" id="234194"/>
<dbReference type="EnsemblPlants" id="AT5G12250.1">
    <property type="protein sequence ID" value="AT5G12250.1"/>
    <property type="gene ID" value="AT5G12250"/>
</dbReference>
<dbReference type="GeneID" id="831100"/>
<dbReference type="Gramene" id="AT5G12250.1">
    <property type="protein sequence ID" value="AT5G12250.1"/>
    <property type="gene ID" value="AT5G12250"/>
</dbReference>
<dbReference type="KEGG" id="ath:AT5G12250"/>
<dbReference type="Araport" id="AT5G12250"/>
<dbReference type="TAIR" id="AT5G12250">
    <property type="gene designation" value="TUB6"/>
</dbReference>
<dbReference type="eggNOG" id="KOG1375">
    <property type="taxonomic scope" value="Eukaryota"/>
</dbReference>
<dbReference type="HOGENOM" id="CLU_015718_1_1_1"/>
<dbReference type="InParanoid" id="P29514"/>
<dbReference type="OMA" id="MANTTKY"/>
<dbReference type="OrthoDB" id="1662883at2759"/>
<dbReference type="PhylomeDB" id="P29514"/>
<dbReference type="PRO" id="PR:P29514"/>
<dbReference type="Proteomes" id="UP000006548">
    <property type="component" value="Chromosome 5"/>
</dbReference>
<dbReference type="ExpressionAtlas" id="P29514">
    <property type="expression patterns" value="baseline and differential"/>
</dbReference>
<dbReference type="GO" id="GO:0005874">
    <property type="term" value="C:microtubule"/>
    <property type="evidence" value="ECO:0007669"/>
    <property type="project" value="UniProtKB-KW"/>
</dbReference>
<dbReference type="GO" id="GO:0015630">
    <property type="term" value="C:microtubule cytoskeleton"/>
    <property type="evidence" value="ECO:0000250"/>
    <property type="project" value="TAIR"/>
</dbReference>
<dbReference type="GO" id="GO:0009536">
    <property type="term" value="C:plastid"/>
    <property type="evidence" value="ECO:0007005"/>
    <property type="project" value="TAIR"/>
</dbReference>
<dbReference type="GO" id="GO:0005525">
    <property type="term" value="F:GTP binding"/>
    <property type="evidence" value="ECO:0007669"/>
    <property type="project" value="UniProtKB-KW"/>
</dbReference>
<dbReference type="GO" id="GO:0003924">
    <property type="term" value="F:GTPase activity"/>
    <property type="evidence" value="ECO:0007669"/>
    <property type="project" value="InterPro"/>
</dbReference>
<dbReference type="GO" id="GO:0046872">
    <property type="term" value="F:metal ion binding"/>
    <property type="evidence" value="ECO:0007669"/>
    <property type="project" value="UniProtKB-KW"/>
</dbReference>
<dbReference type="GO" id="GO:0003729">
    <property type="term" value="F:mRNA binding"/>
    <property type="evidence" value="ECO:0000314"/>
    <property type="project" value="TAIR"/>
</dbReference>
<dbReference type="GO" id="GO:0005200">
    <property type="term" value="F:structural constituent of cytoskeleton"/>
    <property type="evidence" value="ECO:0000250"/>
    <property type="project" value="TAIR"/>
</dbReference>
<dbReference type="GO" id="GO:0007017">
    <property type="term" value="P:microtubule-based process"/>
    <property type="evidence" value="ECO:0000250"/>
    <property type="project" value="TAIR"/>
</dbReference>
<dbReference type="GO" id="GO:0009409">
    <property type="term" value="P:response to cold"/>
    <property type="evidence" value="ECO:0000270"/>
    <property type="project" value="TAIR"/>
</dbReference>
<dbReference type="CDD" id="cd02187">
    <property type="entry name" value="beta_tubulin"/>
    <property type="match status" value="1"/>
</dbReference>
<dbReference type="FunFam" id="1.10.287.600:FF:000006">
    <property type="entry name" value="Tubulin beta chain"/>
    <property type="match status" value="1"/>
</dbReference>
<dbReference type="FunFam" id="3.30.1330.20:FF:000002">
    <property type="entry name" value="Tubulin beta chain"/>
    <property type="match status" value="1"/>
</dbReference>
<dbReference type="FunFam" id="3.40.50.1440:FF:000005">
    <property type="entry name" value="Tubulin beta chain"/>
    <property type="match status" value="1"/>
</dbReference>
<dbReference type="Gene3D" id="1.10.287.600">
    <property type="entry name" value="Helix hairpin bin"/>
    <property type="match status" value="1"/>
</dbReference>
<dbReference type="Gene3D" id="3.30.1330.20">
    <property type="entry name" value="Tubulin/FtsZ, C-terminal domain"/>
    <property type="match status" value="1"/>
</dbReference>
<dbReference type="Gene3D" id="3.40.50.1440">
    <property type="entry name" value="Tubulin/FtsZ, GTPase domain"/>
    <property type="match status" value="1"/>
</dbReference>
<dbReference type="InterPro" id="IPR013838">
    <property type="entry name" value="Beta-tubulin_BS"/>
</dbReference>
<dbReference type="InterPro" id="IPR002453">
    <property type="entry name" value="Beta_tubulin"/>
</dbReference>
<dbReference type="InterPro" id="IPR008280">
    <property type="entry name" value="Tub_FtsZ_C"/>
</dbReference>
<dbReference type="InterPro" id="IPR000217">
    <property type="entry name" value="Tubulin"/>
</dbReference>
<dbReference type="InterPro" id="IPR037103">
    <property type="entry name" value="Tubulin/FtsZ-like_C"/>
</dbReference>
<dbReference type="InterPro" id="IPR018316">
    <property type="entry name" value="Tubulin/FtsZ_2-layer-sand-dom"/>
</dbReference>
<dbReference type="InterPro" id="IPR036525">
    <property type="entry name" value="Tubulin/FtsZ_GTPase_sf"/>
</dbReference>
<dbReference type="InterPro" id="IPR023123">
    <property type="entry name" value="Tubulin_C"/>
</dbReference>
<dbReference type="InterPro" id="IPR017975">
    <property type="entry name" value="Tubulin_CS"/>
</dbReference>
<dbReference type="InterPro" id="IPR003008">
    <property type="entry name" value="Tubulin_FtsZ_GTPase"/>
</dbReference>
<dbReference type="PANTHER" id="PTHR11588">
    <property type="entry name" value="TUBULIN"/>
    <property type="match status" value="1"/>
</dbReference>
<dbReference type="Pfam" id="PF00091">
    <property type="entry name" value="Tubulin"/>
    <property type="match status" value="1"/>
</dbReference>
<dbReference type="Pfam" id="PF03953">
    <property type="entry name" value="Tubulin_C"/>
    <property type="match status" value="1"/>
</dbReference>
<dbReference type="PRINTS" id="PR01163">
    <property type="entry name" value="BETATUBULIN"/>
</dbReference>
<dbReference type="PRINTS" id="PR01161">
    <property type="entry name" value="TUBULIN"/>
</dbReference>
<dbReference type="SMART" id="SM00864">
    <property type="entry name" value="Tubulin"/>
    <property type="match status" value="1"/>
</dbReference>
<dbReference type="SMART" id="SM00865">
    <property type="entry name" value="Tubulin_C"/>
    <property type="match status" value="1"/>
</dbReference>
<dbReference type="SUPFAM" id="SSF55307">
    <property type="entry name" value="Tubulin C-terminal domain-like"/>
    <property type="match status" value="1"/>
</dbReference>
<dbReference type="SUPFAM" id="SSF52490">
    <property type="entry name" value="Tubulin nucleotide-binding domain-like"/>
    <property type="match status" value="1"/>
</dbReference>
<dbReference type="PROSITE" id="PS00227">
    <property type="entry name" value="TUBULIN"/>
    <property type="match status" value="1"/>
</dbReference>
<dbReference type="PROSITE" id="PS00228">
    <property type="entry name" value="TUBULIN_B_AUTOREG"/>
    <property type="match status" value="1"/>
</dbReference>
<organism>
    <name type="scientific">Arabidopsis thaliana</name>
    <name type="common">Mouse-ear cress</name>
    <dbReference type="NCBI Taxonomy" id="3702"/>
    <lineage>
        <taxon>Eukaryota</taxon>
        <taxon>Viridiplantae</taxon>
        <taxon>Streptophyta</taxon>
        <taxon>Embryophyta</taxon>
        <taxon>Tracheophyta</taxon>
        <taxon>Spermatophyta</taxon>
        <taxon>Magnoliopsida</taxon>
        <taxon>eudicotyledons</taxon>
        <taxon>Gunneridae</taxon>
        <taxon>Pentapetalae</taxon>
        <taxon>rosids</taxon>
        <taxon>malvids</taxon>
        <taxon>Brassicales</taxon>
        <taxon>Brassicaceae</taxon>
        <taxon>Camelineae</taxon>
        <taxon>Arabidopsis</taxon>
    </lineage>
</organism>
<reference key="1">
    <citation type="journal article" date="1992" name="Plant Cell">
        <title>The small genome of Arabidopsis contains at least nine expressed beta-tubulin genes.</title>
        <authorList>
            <person name="Snustad D.P."/>
            <person name="Haas N.A."/>
            <person name="Kopczak S.D."/>
            <person name="Silflow C.D."/>
        </authorList>
    </citation>
    <scope>NUCLEOTIDE SEQUENCE [GENOMIC DNA]</scope>
    <source>
        <strain>cv. Columbia</strain>
    </source>
</reference>
<reference key="2">
    <citation type="journal article" date="1997" name="DNA Res.">
        <title>Structural analysis of Arabidopsis thaliana chromosome 5. III. Sequence features of the regions of 1,191,918 bp covered by seventeen physically assigned P1 clones.</title>
        <authorList>
            <person name="Nakamura Y."/>
            <person name="Sato S."/>
            <person name="Kaneko T."/>
            <person name="Kotani H."/>
            <person name="Asamizu E."/>
            <person name="Miyajima N."/>
            <person name="Tabata S."/>
        </authorList>
    </citation>
    <scope>NUCLEOTIDE SEQUENCE [LARGE SCALE GENOMIC DNA]</scope>
    <source>
        <strain>cv. Columbia</strain>
    </source>
</reference>
<reference key="3">
    <citation type="journal article" date="2017" name="Plant J.">
        <title>Araport11: a complete reannotation of the Arabidopsis thaliana reference genome.</title>
        <authorList>
            <person name="Cheng C.Y."/>
            <person name="Krishnakumar V."/>
            <person name="Chan A.P."/>
            <person name="Thibaud-Nissen F."/>
            <person name="Schobel S."/>
            <person name="Town C.D."/>
        </authorList>
    </citation>
    <scope>GENOME REANNOTATION</scope>
    <source>
        <strain>cv. Columbia</strain>
    </source>
</reference>
<reference key="4">
    <citation type="journal article" date="2003" name="Science">
        <title>Empirical analysis of transcriptional activity in the Arabidopsis genome.</title>
        <authorList>
            <person name="Yamada K."/>
            <person name="Lim J."/>
            <person name="Dale J.M."/>
            <person name="Chen H."/>
            <person name="Shinn P."/>
            <person name="Palm C.J."/>
            <person name="Southwick A.M."/>
            <person name="Wu H.C."/>
            <person name="Kim C.J."/>
            <person name="Nguyen M."/>
            <person name="Pham P.K."/>
            <person name="Cheuk R.F."/>
            <person name="Karlin-Newmann G."/>
            <person name="Liu S.X."/>
            <person name="Lam B."/>
            <person name="Sakano H."/>
            <person name="Wu T."/>
            <person name="Yu G."/>
            <person name="Miranda M."/>
            <person name="Quach H.L."/>
            <person name="Tripp M."/>
            <person name="Chang C.H."/>
            <person name="Lee J.M."/>
            <person name="Toriumi M.J."/>
            <person name="Chan M.M."/>
            <person name="Tang C.C."/>
            <person name="Onodera C.S."/>
            <person name="Deng J.M."/>
            <person name="Akiyama K."/>
            <person name="Ansari Y."/>
            <person name="Arakawa T."/>
            <person name="Banh J."/>
            <person name="Banno F."/>
            <person name="Bowser L."/>
            <person name="Brooks S.Y."/>
            <person name="Carninci P."/>
            <person name="Chao Q."/>
            <person name="Choy N."/>
            <person name="Enju A."/>
            <person name="Goldsmith A.D."/>
            <person name="Gurjal M."/>
            <person name="Hansen N.F."/>
            <person name="Hayashizaki Y."/>
            <person name="Johnson-Hopson C."/>
            <person name="Hsuan V.W."/>
            <person name="Iida K."/>
            <person name="Karnes M."/>
            <person name="Khan S."/>
            <person name="Koesema E."/>
            <person name="Ishida J."/>
            <person name="Jiang P.X."/>
            <person name="Jones T."/>
            <person name="Kawai J."/>
            <person name="Kamiya A."/>
            <person name="Meyers C."/>
            <person name="Nakajima M."/>
            <person name="Narusaka M."/>
            <person name="Seki M."/>
            <person name="Sakurai T."/>
            <person name="Satou M."/>
            <person name="Tamse R."/>
            <person name="Vaysberg M."/>
            <person name="Wallender E.K."/>
            <person name="Wong C."/>
            <person name="Yamamura Y."/>
            <person name="Yuan S."/>
            <person name="Shinozaki K."/>
            <person name="Davis R.W."/>
            <person name="Theologis A."/>
            <person name="Ecker J.R."/>
        </authorList>
    </citation>
    <scope>NUCLEOTIDE SEQUENCE [LARGE SCALE MRNA]</scope>
    <source>
        <strain>cv. Columbia</strain>
    </source>
</reference>
<accession>P29514</accession>
<name>TBB6_ARATH</name>
<gene>
    <name type="primary">TUBB6</name>
    <name type="synonym">TUB6</name>
    <name type="ordered locus">At5g12250</name>
    <name type="ORF">MXC9.21</name>
</gene>
<sequence>MREILHIQGGQCGNQIGSKFWEVVCDEHGIDPTGRYVGNSDLQLERVNVYYNEASCGRYVPRAILMDLEPGTMDSVRTGPYGQIFRPDNFVFGQSGAGNNWAKGHYTEGAELIDAVLDVVRKEAENCDCLQGFQVCHSLGGGTGSGMGTLLISKIREEYPDRMMLTFSVFPSPKVSDTVVEPYNATLSVHQLVENADECMVLDNEALYDICFRTLKLTTPSFGDLNHLISATMSGVTCCLRFPGQLNSDLRKLAVNLIPFPRLHFFMVGFAPLTSRGSQQYRALTVPELTQQMWDSKNMMCAADPRHGRYLTASAMFRGKMSTKEVDEQMINVQNKNSSYFVEWIPNNVKSSVCDIAPRGLSMASTFIGNSTSIQEMFRRVSEQFTAMFRRKAFLHWYTGEGMDEMEFTEAESNMNDLVSEYQQYQDATADDEGEYEEDEDEEEILDHE</sequence>
<feature type="chain" id="PRO_0000048325" description="Tubulin beta-6 chain">
    <location>
        <begin position="1"/>
        <end position="449"/>
    </location>
</feature>
<feature type="region of interest" description="Disordered" evidence="4">
    <location>
        <begin position="425"/>
        <end position="449"/>
    </location>
</feature>
<feature type="compositionally biased region" description="Acidic residues" evidence="4">
    <location>
        <begin position="429"/>
        <end position="449"/>
    </location>
</feature>
<feature type="binding site" evidence="3">
    <location>
        <position position="11"/>
    </location>
    <ligand>
        <name>GTP</name>
        <dbReference type="ChEBI" id="CHEBI:37565"/>
    </ligand>
</feature>
<feature type="binding site" evidence="2">
    <location>
        <position position="69"/>
    </location>
    <ligand>
        <name>GTP</name>
        <dbReference type="ChEBI" id="CHEBI:37565"/>
    </ligand>
</feature>
<feature type="binding site" evidence="2">
    <location>
        <position position="69"/>
    </location>
    <ligand>
        <name>Mg(2+)</name>
        <dbReference type="ChEBI" id="CHEBI:18420"/>
    </ligand>
</feature>
<feature type="binding site" evidence="3">
    <location>
        <position position="138"/>
    </location>
    <ligand>
        <name>GTP</name>
        <dbReference type="ChEBI" id="CHEBI:37565"/>
    </ligand>
</feature>
<feature type="binding site" evidence="3">
    <location>
        <position position="142"/>
    </location>
    <ligand>
        <name>GTP</name>
        <dbReference type="ChEBI" id="CHEBI:37565"/>
    </ligand>
</feature>
<feature type="binding site" evidence="3">
    <location>
        <position position="143"/>
    </location>
    <ligand>
        <name>GTP</name>
        <dbReference type="ChEBI" id="CHEBI:37565"/>
    </ligand>
</feature>
<feature type="binding site" evidence="3">
    <location>
        <position position="144"/>
    </location>
    <ligand>
        <name>GTP</name>
        <dbReference type="ChEBI" id="CHEBI:37565"/>
    </ligand>
</feature>
<feature type="binding site" evidence="3">
    <location>
        <position position="204"/>
    </location>
    <ligand>
        <name>GTP</name>
        <dbReference type="ChEBI" id="CHEBI:37565"/>
    </ligand>
</feature>
<feature type="binding site" evidence="3">
    <location>
        <position position="226"/>
    </location>
    <ligand>
        <name>GTP</name>
        <dbReference type="ChEBI" id="CHEBI:37565"/>
    </ligand>
</feature>